<reference key="1">
    <citation type="submission" date="2009-02" db="EMBL/GenBank/DDBJ databases">
        <title>Vibrio splendidus str. LGP32 complete genome.</title>
        <authorList>
            <person name="Mazel D."/>
            <person name="Le Roux F."/>
        </authorList>
    </citation>
    <scope>NUCLEOTIDE SEQUENCE [LARGE SCALE GENOMIC DNA]</scope>
    <source>
        <strain>LGP32</strain>
    </source>
</reference>
<name>NQRA_VIBA3</name>
<comment type="function">
    <text evidence="1">NQR complex catalyzes the reduction of ubiquinone-1 to ubiquinol by two successive reactions, coupled with the transport of Na(+) ions from the cytoplasm to the periplasm. NqrA to NqrE are probably involved in the second step, the conversion of ubisemiquinone to ubiquinol.</text>
</comment>
<comment type="catalytic activity">
    <reaction evidence="1">
        <text>a ubiquinone + n Na(+)(in) + NADH + H(+) = a ubiquinol + n Na(+)(out) + NAD(+)</text>
        <dbReference type="Rhea" id="RHEA:47748"/>
        <dbReference type="Rhea" id="RHEA-COMP:9565"/>
        <dbReference type="Rhea" id="RHEA-COMP:9566"/>
        <dbReference type="ChEBI" id="CHEBI:15378"/>
        <dbReference type="ChEBI" id="CHEBI:16389"/>
        <dbReference type="ChEBI" id="CHEBI:17976"/>
        <dbReference type="ChEBI" id="CHEBI:29101"/>
        <dbReference type="ChEBI" id="CHEBI:57540"/>
        <dbReference type="ChEBI" id="CHEBI:57945"/>
        <dbReference type="EC" id="7.2.1.1"/>
    </reaction>
</comment>
<comment type="subunit">
    <text evidence="1">Composed of six subunits; NqrA, NqrB, NqrC, NqrD, NqrE and NqrF.</text>
</comment>
<comment type="similarity">
    <text evidence="1">Belongs to the NqrA family.</text>
</comment>
<organism>
    <name type="scientific">Vibrio atlanticus (strain LGP32)</name>
    <name type="common">Vibrio splendidus (strain Mel32)</name>
    <dbReference type="NCBI Taxonomy" id="575788"/>
    <lineage>
        <taxon>Bacteria</taxon>
        <taxon>Pseudomonadati</taxon>
        <taxon>Pseudomonadota</taxon>
        <taxon>Gammaproteobacteria</taxon>
        <taxon>Vibrionales</taxon>
        <taxon>Vibrionaceae</taxon>
        <taxon>Vibrio</taxon>
    </lineage>
</organism>
<feature type="chain" id="PRO_1000134931" description="Na(+)-translocating NADH-quinone reductase subunit A">
    <location>
        <begin position="1"/>
        <end position="446"/>
    </location>
</feature>
<keyword id="KW-0406">Ion transport</keyword>
<keyword id="KW-0520">NAD</keyword>
<keyword id="KW-0915">Sodium</keyword>
<keyword id="KW-0739">Sodium transport</keyword>
<keyword id="KW-1278">Translocase</keyword>
<keyword id="KW-0813">Transport</keyword>
<keyword id="KW-0830">Ubiquinone</keyword>
<evidence type="ECO:0000255" key="1">
    <source>
        <dbReference type="HAMAP-Rule" id="MF_00425"/>
    </source>
</evidence>
<gene>
    <name evidence="1" type="primary">nqrA</name>
    <name type="ordered locus">VS_0693</name>
</gene>
<proteinExistence type="inferred from homology"/>
<sequence>MITIKKGLDLPIAGTPSQVINDGKSITKVALLGEEYVGMRPTMHARVGDEVKKGQVLFADKKNPGVVFTSPASGKVIEVNRGAKRVLQSVVIEVAGNEQITFNSYEANQLVSLDRETVKTQLVESGAWTALRTRPFSKVPAVDSETQAIFVTAMDTNPLAAEPELIINEQSDAFVAGLDLLSTLTNGKVYVCKKGTSLPRSAQSNVEEHVFDGPHPAGLAGTHMHYLYPVNAQNVAWSINYQDVIAFGKLFLTGEIYSERVVSLAGPVVNNPRLVRTQIGASLEELTDSELMPGEVRVISGSVLTGTEATGPHAFLGRYHQQVSVLREGRDKELFGWAMPGKNKFSVTRSFLGHLFKGQLFNMTTTTNGSDRSMVPIGNYERVMPLDMEPTLLLRDLCAGDIDSAQALGALELDEEDVALCTFVCPGKYEYGQLLRECLDTIEKEG</sequence>
<protein>
    <recommendedName>
        <fullName evidence="1">Na(+)-translocating NADH-quinone reductase subunit A</fullName>
        <shortName evidence="1">Na(+)-NQR subunit A</shortName>
        <shortName evidence="1">Na(+)-translocating NQR subunit A</shortName>
        <ecNumber evidence="1">7.2.1.1</ecNumber>
    </recommendedName>
    <alternativeName>
        <fullName evidence="1">NQR complex subunit A</fullName>
    </alternativeName>
    <alternativeName>
        <fullName evidence="1">NQR-1 subunit A</fullName>
    </alternativeName>
</protein>
<dbReference type="EC" id="7.2.1.1" evidence="1"/>
<dbReference type="EMBL" id="FM954972">
    <property type="protein sequence ID" value="CAV17687.1"/>
    <property type="molecule type" value="Genomic_DNA"/>
</dbReference>
<dbReference type="SMR" id="B7VKD2"/>
<dbReference type="STRING" id="575788.VS_0693"/>
<dbReference type="KEGG" id="vsp:VS_0693"/>
<dbReference type="PATRIC" id="fig|575788.5.peg.2041"/>
<dbReference type="eggNOG" id="COG1726">
    <property type="taxonomic scope" value="Bacteria"/>
</dbReference>
<dbReference type="HOGENOM" id="CLU_046656_0_0_6"/>
<dbReference type="Proteomes" id="UP000009100">
    <property type="component" value="Chromosome 1"/>
</dbReference>
<dbReference type="GO" id="GO:0016655">
    <property type="term" value="F:oxidoreductase activity, acting on NAD(P)H, quinone or similar compound as acceptor"/>
    <property type="evidence" value="ECO:0007669"/>
    <property type="project" value="UniProtKB-UniRule"/>
</dbReference>
<dbReference type="GO" id="GO:0006814">
    <property type="term" value="P:sodium ion transport"/>
    <property type="evidence" value="ECO:0007669"/>
    <property type="project" value="UniProtKB-UniRule"/>
</dbReference>
<dbReference type="HAMAP" id="MF_00425">
    <property type="entry name" value="NqrA"/>
    <property type="match status" value="1"/>
</dbReference>
<dbReference type="InterPro" id="IPR008703">
    <property type="entry name" value="NqrA"/>
</dbReference>
<dbReference type="InterPro" id="IPR056148">
    <property type="entry name" value="NQRA_2nd"/>
</dbReference>
<dbReference type="InterPro" id="IPR022615">
    <property type="entry name" value="NqrA_C_domain"/>
</dbReference>
<dbReference type="InterPro" id="IPR056147">
    <property type="entry name" value="NQRA_N"/>
</dbReference>
<dbReference type="NCBIfam" id="TIGR01936">
    <property type="entry name" value="nqrA"/>
    <property type="match status" value="1"/>
</dbReference>
<dbReference type="NCBIfam" id="NF003759">
    <property type="entry name" value="PRK05352.1-2"/>
    <property type="match status" value="1"/>
</dbReference>
<dbReference type="PANTHER" id="PTHR37839">
    <property type="entry name" value="NA(+)-TRANSLOCATING NADH-QUINONE REDUCTASE SUBUNIT A"/>
    <property type="match status" value="1"/>
</dbReference>
<dbReference type="PANTHER" id="PTHR37839:SF1">
    <property type="entry name" value="NA(+)-TRANSLOCATING NADH-QUINONE REDUCTASE SUBUNIT A"/>
    <property type="match status" value="1"/>
</dbReference>
<dbReference type="Pfam" id="PF24836">
    <property type="entry name" value="NQRA_2nd"/>
    <property type="match status" value="1"/>
</dbReference>
<dbReference type="Pfam" id="PF05896">
    <property type="entry name" value="NQRA_N"/>
    <property type="match status" value="1"/>
</dbReference>
<dbReference type="Pfam" id="PF11973">
    <property type="entry name" value="NQRA_SLBB"/>
    <property type="match status" value="1"/>
</dbReference>
<accession>B7VKD2</accession>